<accession>Q9RQ86</accession>
<keyword id="KW-0028">Amino-acid biosynthesis</keyword>
<keyword id="KW-0067">ATP-binding</keyword>
<keyword id="KW-0963">Cytoplasm</keyword>
<keyword id="KW-0328">Glycosyltransferase</keyword>
<keyword id="KW-0368">Histidine biosynthesis</keyword>
<keyword id="KW-0460">Magnesium</keyword>
<keyword id="KW-0479">Metal-binding</keyword>
<keyword id="KW-0547">Nucleotide-binding</keyword>
<keyword id="KW-0808">Transferase</keyword>
<comment type="function">
    <text evidence="1">Catalyzes the condensation of ATP and 5-phosphoribose 1-diphosphate to form N'-(5'-phosphoribosyl)-ATP (PR-ATP). Has a crucial role in the pathway because the rate of histidine biosynthesis seems to be controlled primarily by regulation of HisG enzymatic activity.</text>
</comment>
<comment type="catalytic activity">
    <reaction evidence="1">
        <text>1-(5-phospho-beta-D-ribosyl)-ATP + diphosphate = 5-phospho-alpha-D-ribose 1-diphosphate + ATP</text>
        <dbReference type="Rhea" id="RHEA:18473"/>
        <dbReference type="ChEBI" id="CHEBI:30616"/>
        <dbReference type="ChEBI" id="CHEBI:33019"/>
        <dbReference type="ChEBI" id="CHEBI:58017"/>
        <dbReference type="ChEBI" id="CHEBI:73183"/>
        <dbReference type="EC" id="2.4.2.17"/>
    </reaction>
</comment>
<comment type="cofactor">
    <cofactor evidence="1">
        <name>Mg(2+)</name>
        <dbReference type="ChEBI" id="CHEBI:18420"/>
    </cofactor>
</comment>
<comment type="activity regulation">
    <text evidence="1">Feedback inhibited by histidine.</text>
</comment>
<comment type="pathway">
    <text evidence="1">Amino-acid biosynthesis; L-histidine biosynthesis; L-histidine from 5-phospho-alpha-D-ribose 1-diphosphate: step 1/9.</text>
</comment>
<comment type="subunit">
    <text evidence="1">Equilibrium between an active dimeric form, an inactive hexameric form and higher aggregates. Interconversion between the various forms is largely reversible and is influenced by the natural substrates and inhibitors of the enzyme.</text>
</comment>
<comment type="subcellular location">
    <subcellularLocation>
        <location evidence="1">Cytoplasm</location>
    </subcellularLocation>
</comment>
<comment type="similarity">
    <text evidence="1">Belongs to the ATP phosphoribosyltransferase family. Long subfamily.</text>
</comment>
<organism>
    <name type="scientific">Buchnera aphidicola subsp. Schlechtendalia chinensis</name>
    <dbReference type="NCBI Taxonomy" id="118110"/>
    <lineage>
        <taxon>Bacteria</taxon>
        <taxon>Pseudomonadati</taxon>
        <taxon>Pseudomonadota</taxon>
        <taxon>Gammaproteobacteria</taxon>
        <taxon>Enterobacterales</taxon>
        <taxon>Erwiniaceae</taxon>
        <taxon>Buchnera</taxon>
    </lineage>
</organism>
<feature type="chain" id="PRO_0000151838" description="ATP phosphoribosyltransferase">
    <location>
        <begin position="1"/>
        <end position="299"/>
    </location>
</feature>
<dbReference type="EC" id="2.4.2.17" evidence="1"/>
<dbReference type="EMBL" id="AF129282">
    <property type="protein sequence ID" value="AAF13772.1"/>
    <property type="molecule type" value="Genomic_DNA"/>
</dbReference>
<dbReference type="SMR" id="Q9RQ86"/>
<dbReference type="STRING" id="118110.XW81_00465"/>
<dbReference type="UniPathway" id="UPA00031">
    <property type="reaction ID" value="UER00006"/>
</dbReference>
<dbReference type="GO" id="GO:0005737">
    <property type="term" value="C:cytoplasm"/>
    <property type="evidence" value="ECO:0007669"/>
    <property type="project" value="UniProtKB-SubCell"/>
</dbReference>
<dbReference type="GO" id="GO:0005524">
    <property type="term" value="F:ATP binding"/>
    <property type="evidence" value="ECO:0007669"/>
    <property type="project" value="UniProtKB-KW"/>
</dbReference>
<dbReference type="GO" id="GO:0003879">
    <property type="term" value="F:ATP phosphoribosyltransferase activity"/>
    <property type="evidence" value="ECO:0007669"/>
    <property type="project" value="UniProtKB-UniRule"/>
</dbReference>
<dbReference type="GO" id="GO:0000287">
    <property type="term" value="F:magnesium ion binding"/>
    <property type="evidence" value="ECO:0007669"/>
    <property type="project" value="UniProtKB-UniRule"/>
</dbReference>
<dbReference type="GO" id="GO:0000105">
    <property type="term" value="P:L-histidine biosynthetic process"/>
    <property type="evidence" value="ECO:0007669"/>
    <property type="project" value="UniProtKB-UniRule"/>
</dbReference>
<dbReference type="FunFam" id="3.30.70.120:FF:000002">
    <property type="entry name" value="ATP phosphoribosyltransferase"/>
    <property type="match status" value="1"/>
</dbReference>
<dbReference type="FunFam" id="3.40.190.10:FF:000008">
    <property type="entry name" value="ATP phosphoribosyltransferase"/>
    <property type="match status" value="1"/>
</dbReference>
<dbReference type="Gene3D" id="3.30.70.120">
    <property type="match status" value="1"/>
</dbReference>
<dbReference type="Gene3D" id="3.40.190.10">
    <property type="entry name" value="Periplasmic binding protein-like II"/>
    <property type="match status" value="2"/>
</dbReference>
<dbReference type="HAMAP" id="MF_00079">
    <property type="entry name" value="HisG_Long"/>
    <property type="match status" value="1"/>
</dbReference>
<dbReference type="InterPro" id="IPR020621">
    <property type="entry name" value="ATP-PRT_HisG_long"/>
</dbReference>
<dbReference type="InterPro" id="IPR013820">
    <property type="entry name" value="ATP_PRibTrfase_cat"/>
</dbReference>
<dbReference type="InterPro" id="IPR018198">
    <property type="entry name" value="ATP_PRibTrfase_CS"/>
</dbReference>
<dbReference type="InterPro" id="IPR001348">
    <property type="entry name" value="ATP_PRibTrfase_HisG"/>
</dbReference>
<dbReference type="InterPro" id="IPR013115">
    <property type="entry name" value="HisG_C"/>
</dbReference>
<dbReference type="InterPro" id="IPR011322">
    <property type="entry name" value="N-reg_PII-like_a/b"/>
</dbReference>
<dbReference type="InterPro" id="IPR015867">
    <property type="entry name" value="N-reg_PII/ATP_PRibTrfase_C"/>
</dbReference>
<dbReference type="NCBIfam" id="TIGR00070">
    <property type="entry name" value="hisG"/>
    <property type="match status" value="1"/>
</dbReference>
<dbReference type="NCBIfam" id="TIGR03455">
    <property type="entry name" value="HisG_C-term"/>
    <property type="match status" value="1"/>
</dbReference>
<dbReference type="PANTHER" id="PTHR21403:SF8">
    <property type="entry name" value="ATP PHOSPHORIBOSYLTRANSFERASE"/>
    <property type="match status" value="1"/>
</dbReference>
<dbReference type="PANTHER" id="PTHR21403">
    <property type="entry name" value="ATP PHOSPHORIBOSYLTRANSFERASE ATP-PRTASE"/>
    <property type="match status" value="1"/>
</dbReference>
<dbReference type="Pfam" id="PF01634">
    <property type="entry name" value="HisG"/>
    <property type="match status" value="1"/>
</dbReference>
<dbReference type="Pfam" id="PF08029">
    <property type="entry name" value="HisG_C"/>
    <property type="match status" value="1"/>
</dbReference>
<dbReference type="SUPFAM" id="SSF54913">
    <property type="entry name" value="GlnB-like"/>
    <property type="match status" value="1"/>
</dbReference>
<dbReference type="SUPFAM" id="SSF53850">
    <property type="entry name" value="Periplasmic binding protein-like II"/>
    <property type="match status" value="1"/>
</dbReference>
<dbReference type="PROSITE" id="PS01316">
    <property type="entry name" value="ATP_P_PHORIBOSYLTR"/>
    <property type="match status" value="1"/>
</dbReference>
<gene>
    <name evidence="1" type="primary">hisG</name>
</gene>
<reference key="1">
    <citation type="journal article" date="1999" name="Mol. Biol. Evol.">
        <title>Sequence evolution in bacterial endosymbionts having extreme base compositions.</title>
        <authorList>
            <person name="Clark M.A."/>
            <person name="Moran N.A."/>
            <person name="Baumann P."/>
        </authorList>
    </citation>
    <scope>NUCLEOTIDE SEQUENCE [GENOMIC DNA]</scope>
</reference>
<name>HIS1_BUCSC</name>
<evidence type="ECO:0000255" key="1">
    <source>
        <dbReference type="HAMAP-Rule" id="MF_00079"/>
    </source>
</evidence>
<proteinExistence type="inferred from homology"/>
<sequence>MIHNNRLRIVMQKNWKLSNDSKDLLARCGIKINLYKKKLIAFSENMPIVYICVRDDDIPGLIMDGIVDVGIIGENVLEEEVLSRKLRSDNIDYIKLKRLDFGTCRLSLAIPLDKTYKDISCLNNSRIATSYPHLLKKYFDKNNITFKSCMLNGSVEVAPRAGLSDAICDLVSTGATLEANGLREVQVIFRSKACLICKVGDISSEKRNVLNTLLTRIQGVIKARESKYIMLHAPIKRLEEVVQLLHGAERPTILKLAGDNTRVAMHMVSSETLFWETMENLKLLGASSILVLPIEKMME</sequence>
<protein>
    <recommendedName>
        <fullName evidence="1">ATP phosphoribosyltransferase</fullName>
        <shortName evidence="1">ATP-PRT</shortName>
        <shortName evidence="1">ATP-PRTase</shortName>
        <ecNumber evidence="1">2.4.2.17</ecNumber>
    </recommendedName>
</protein>